<accession>Q67NS7</accession>
<comment type="function">
    <text evidence="1">Catalyzes the reduction of the glycolytic intermediate dihydroxyacetone phosphate (DHAP) to sn-glycerol 3-phosphate (G3P), the key precursor for phospholipid synthesis.</text>
</comment>
<comment type="catalytic activity">
    <reaction evidence="1">
        <text>sn-glycerol 3-phosphate + NAD(+) = dihydroxyacetone phosphate + NADH + H(+)</text>
        <dbReference type="Rhea" id="RHEA:11092"/>
        <dbReference type="ChEBI" id="CHEBI:15378"/>
        <dbReference type="ChEBI" id="CHEBI:57540"/>
        <dbReference type="ChEBI" id="CHEBI:57597"/>
        <dbReference type="ChEBI" id="CHEBI:57642"/>
        <dbReference type="ChEBI" id="CHEBI:57945"/>
        <dbReference type="EC" id="1.1.1.94"/>
    </reaction>
    <physiologicalReaction direction="right-to-left" evidence="1">
        <dbReference type="Rhea" id="RHEA:11094"/>
    </physiologicalReaction>
</comment>
<comment type="catalytic activity">
    <reaction evidence="1">
        <text>sn-glycerol 3-phosphate + NADP(+) = dihydroxyacetone phosphate + NADPH + H(+)</text>
        <dbReference type="Rhea" id="RHEA:11096"/>
        <dbReference type="ChEBI" id="CHEBI:15378"/>
        <dbReference type="ChEBI" id="CHEBI:57597"/>
        <dbReference type="ChEBI" id="CHEBI:57642"/>
        <dbReference type="ChEBI" id="CHEBI:57783"/>
        <dbReference type="ChEBI" id="CHEBI:58349"/>
        <dbReference type="EC" id="1.1.1.94"/>
    </reaction>
    <physiologicalReaction direction="right-to-left" evidence="1">
        <dbReference type="Rhea" id="RHEA:11098"/>
    </physiologicalReaction>
</comment>
<comment type="pathway">
    <text evidence="1">Membrane lipid metabolism; glycerophospholipid metabolism.</text>
</comment>
<comment type="subcellular location">
    <subcellularLocation>
        <location evidence="1">Cytoplasm</location>
    </subcellularLocation>
</comment>
<comment type="similarity">
    <text evidence="1">Belongs to the NAD-dependent glycerol-3-phosphate dehydrogenase family.</text>
</comment>
<sequence length="342" mass="35969">MDMAILPAGVWGTALAVPASAAGRRVRLWRRTPGWAESWDRGHPVLPGLKLPENVVACDSAQAAVSDADLVILSPAGAGLRPVCRLVRPHLRPDAVIVCATKSIEPETHLLVHQVVEEELPGHRGRIVALSGPNFAHEVAAGLPTGAVAACPDLSLADWVQQALMTDRFRVYTNPDLVGVELAGALKNVIALGAGISDGLGMGDNARAALITRGLVEMARLGRAMGANPLTFAGLAGMGDLVLSCTGDSSRNRRAGLAIGRGQSAEAFLAETGLTVEGITTARAGWQLAQRLGVRMPITEAIYQVLYEGLPPLTAMERLMARPRAHELEEVAGADLKPPFDP</sequence>
<dbReference type="EC" id="1.1.1.94" evidence="1"/>
<dbReference type="EMBL" id="AP006840">
    <property type="protein sequence ID" value="BAD40666.1"/>
    <property type="molecule type" value="Genomic_DNA"/>
</dbReference>
<dbReference type="SMR" id="Q67NS7"/>
<dbReference type="STRING" id="292459.STH1681"/>
<dbReference type="KEGG" id="sth:STH1681"/>
<dbReference type="eggNOG" id="COG0240">
    <property type="taxonomic scope" value="Bacteria"/>
</dbReference>
<dbReference type="HOGENOM" id="CLU_033449_0_2_9"/>
<dbReference type="UniPathway" id="UPA00940"/>
<dbReference type="Proteomes" id="UP000000417">
    <property type="component" value="Chromosome"/>
</dbReference>
<dbReference type="GO" id="GO:0005829">
    <property type="term" value="C:cytosol"/>
    <property type="evidence" value="ECO:0007669"/>
    <property type="project" value="TreeGrafter"/>
</dbReference>
<dbReference type="GO" id="GO:0047952">
    <property type="term" value="F:glycerol-3-phosphate dehydrogenase [NAD(P)+] activity"/>
    <property type="evidence" value="ECO:0007669"/>
    <property type="project" value="UniProtKB-UniRule"/>
</dbReference>
<dbReference type="GO" id="GO:0051287">
    <property type="term" value="F:NAD binding"/>
    <property type="evidence" value="ECO:0007669"/>
    <property type="project" value="InterPro"/>
</dbReference>
<dbReference type="GO" id="GO:0005975">
    <property type="term" value="P:carbohydrate metabolic process"/>
    <property type="evidence" value="ECO:0007669"/>
    <property type="project" value="InterPro"/>
</dbReference>
<dbReference type="GO" id="GO:0046167">
    <property type="term" value="P:glycerol-3-phosphate biosynthetic process"/>
    <property type="evidence" value="ECO:0007669"/>
    <property type="project" value="UniProtKB-UniRule"/>
</dbReference>
<dbReference type="GO" id="GO:0046168">
    <property type="term" value="P:glycerol-3-phosphate catabolic process"/>
    <property type="evidence" value="ECO:0007669"/>
    <property type="project" value="InterPro"/>
</dbReference>
<dbReference type="GO" id="GO:0006650">
    <property type="term" value="P:glycerophospholipid metabolic process"/>
    <property type="evidence" value="ECO:0007669"/>
    <property type="project" value="UniProtKB-UniRule"/>
</dbReference>
<dbReference type="GO" id="GO:0008654">
    <property type="term" value="P:phospholipid biosynthetic process"/>
    <property type="evidence" value="ECO:0007669"/>
    <property type="project" value="UniProtKB-KW"/>
</dbReference>
<dbReference type="FunFam" id="1.10.1040.10:FF:000001">
    <property type="entry name" value="Glycerol-3-phosphate dehydrogenase [NAD(P)+]"/>
    <property type="match status" value="1"/>
</dbReference>
<dbReference type="Gene3D" id="1.10.1040.10">
    <property type="entry name" value="N-(1-d-carboxylethyl)-l-norvaline Dehydrogenase, domain 2"/>
    <property type="match status" value="1"/>
</dbReference>
<dbReference type="Gene3D" id="3.40.50.720">
    <property type="entry name" value="NAD(P)-binding Rossmann-like Domain"/>
    <property type="match status" value="1"/>
</dbReference>
<dbReference type="HAMAP" id="MF_00394">
    <property type="entry name" value="NAD_Glyc3P_dehydrog"/>
    <property type="match status" value="1"/>
</dbReference>
<dbReference type="InterPro" id="IPR008927">
    <property type="entry name" value="6-PGluconate_DH-like_C_sf"/>
</dbReference>
<dbReference type="InterPro" id="IPR013328">
    <property type="entry name" value="6PGD_dom2"/>
</dbReference>
<dbReference type="InterPro" id="IPR006168">
    <property type="entry name" value="G3P_DH_NAD-dep"/>
</dbReference>
<dbReference type="InterPro" id="IPR006109">
    <property type="entry name" value="G3P_DH_NAD-dep_C"/>
</dbReference>
<dbReference type="InterPro" id="IPR011128">
    <property type="entry name" value="G3P_DH_NAD-dep_N"/>
</dbReference>
<dbReference type="InterPro" id="IPR036291">
    <property type="entry name" value="NAD(P)-bd_dom_sf"/>
</dbReference>
<dbReference type="NCBIfam" id="NF000940">
    <property type="entry name" value="PRK00094.1-2"/>
    <property type="match status" value="1"/>
</dbReference>
<dbReference type="NCBIfam" id="NF000942">
    <property type="entry name" value="PRK00094.1-4"/>
    <property type="match status" value="1"/>
</dbReference>
<dbReference type="PANTHER" id="PTHR11728">
    <property type="entry name" value="GLYCEROL-3-PHOSPHATE DEHYDROGENASE"/>
    <property type="match status" value="1"/>
</dbReference>
<dbReference type="PANTHER" id="PTHR11728:SF1">
    <property type="entry name" value="GLYCEROL-3-PHOSPHATE DEHYDROGENASE [NAD(+)] 2, CHLOROPLASTIC"/>
    <property type="match status" value="1"/>
</dbReference>
<dbReference type="Pfam" id="PF07479">
    <property type="entry name" value="NAD_Gly3P_dh_C"/>
    <property type="match status" value="1"/>
</dbReference>
<dbReference type="Pfam" id="PF01210">
    <property type="entry name" value="NAD_Gly3P_dh_N"/>
    <property type="match status" value="1"/>
</dbReference>
<dbReference type="PIRSF" id="PIRSF000114">
    <property type="entry name" value="Glycerol-3-P_dh"/>
    <property type="match status" value="1"/>
</dbReference>
<dbReference type="PRINTS" id="PR00077">
    <property type="entry name" value="GPDHDRGNASE"/>
</dbReference>
<dbReference type="SUPFAM" id="SSF48179">
    <property type="entry name" value="6-phosphogluconate dehydrogenase C-terminal domain-like"/>
    <property type="match status" value="1"/>
</dbReference>
<dbReference type="SUPFAM" id="SSF51735">
    <property type="entry name" value="NAD(P)-binding Rossmann-fold domains"/>
    <property type="match status" value="1"/>
</dbReference>
<dbReference type="PROSITE" id="PS00957">
    <property type="entry name" value="NAD_G3PDH"/>
    <property type="match status" value="1"/>
</dbReference>
<proteinExistence type="inferred from homology"/>
<reference key="1">
    <citation type="journal article" date="2004" name="Nucleic Acids Res.">
        <title>Genome sequence of Symbiobacterium thermophilum, an uncultivable bacterium that depends on microbial commensalism.</title>
        <authorList>
            <person name="Ueda K."/>
            <person name="Yamashita A."/>
            <person name="Ishikawa J."/>
            <person name="Shimada M."/>
            <person name="Watsuji T."/>
            <person name="Morimura K."/>
            <person name="Ikeda H."/>
            <person name="Hattori M."/>
            <person name="Beppu T."/>
        </authorList>
    </citation>
    <scope>NUCLEOTIDE SEQUENCE [LARGE SCALE GENOMIC DNA]</scope>
    <source>
        <strain>DSM 24528 / JCM 14929 / IAM 14863 / T</strain>
    </source>
</reference>
<evidence type="ECO:0000255" key="1">
    <source>
        <dbReference type="HAMAP-Rule" id="MF_00394"/>
    </source>
</evidence>
<feature type="chain" id="PRO_0000138044" description="Glycerol-3-phosphate dehydrogenase [NAD(P)+]">
    <location>
        <begin position="1"/>
        <end position="342"/>
    </location>
</feature>
<feature type="active site" description="Proton acceptor" evidence="1">
    <location>
        <position position="187"/>
    </location>
</feature>
<feature type="binding site" evidence="1">
    <location>
        <position position="11"/>
    </location>
    <ligand>
        <name>NADPH</name>
        <dbReference type="ChEBI" id="CHEBI:57783"/>
    </ligand>
</feature>
<feature type="binding site" evidence="1">
    <location>
        <position position="31"/>
    </location>
    <ligand>
        <name>NADPH</name>
        <dbReference type="ChEBI" id="CHEBI:57783"/>
    </ligand>
</feature>
<feature type="binding site" evidence="1">
    <location>
        <position position="102"/>
    </location>
    <ligand>
        <name>NADPH</name>
        <dbReference type="ChEBI" id="CHEBI:57783"/>
    </ligand>
</feature>
<feature type="binding site" evidence="1">
    <location>
        <position position="102"/>
    </location>
    <ligand>
        <name>sn-glycerol 3-phosphate</name>
        <dbReference type="ChEBI" id="CHEBI:57597"/>
    </ligand>
</feature>
<feature type="binding site" evidence="1">
    <location>
        <position position="132"/>
    </location>
    <ligand>
        <name>sn-glycerol 3-phosphate</name>
        <dbReference type="ChEBI" id="CHEBI:57597"/>
    </ligand>
</feature>
<feature type="binding site" evidence="1">
    <location>
        <position position="136"/>
    </location>
    <ligand>
        <name>NADPH</name>
        <dbReference type="ChEBI" id="CHEBI:57783"/>
    </ligand>
</feature>
<feature type="binding site" evidence="1">
    <location>
        <position position="187"/>
    </location>
    <ligand>
        <name>sn-glycerol 3-phosphate</name>
        <dbReference type="ChEBI" id="CHEBI:57597"/>
    </ligand>
</feature>
<feature type="binding site" evidence="1">
    <location>
        <position position="240"/>
    </location>
    <ligand>
        <name>sn-glycerol 3-phosphate</name>
        <dbReference type="ChEBI" id="CHEBI:57597"/>
    </ligand>
</feature>
<feature type="binding site" evidence="1">
    <location>
        <position position="250"/>
    </location>
    <ligand>
        <name>sn-glycerol 3-phosphate</name>
        <dbReference type="ChEBI" id="CHEBI:57597"/>
    </ligand>
</feature>
<feature type="binding site" evidence="1">
    <location>
        <position position="251"/>
    </location>
    <ligand>
        <name>NADPH</name>
        <dbReference type="ChEBI" id="CHEBI:57783"/>
    </ligand>
</feature>
<feature type="binding site" evidence="1">
    <location>
        <position position="251"/>
    </location>
    <ligand>
        <name>sn-glycerol 3-phosphate</name>
        <dbReference type="ChEBI" id="CHEBI:57597"/>
    </ligand>
</feature>
<feature type="binding site" evidence="1">
    <location>
        <position position="252"/>
    </location>
    <ligand>
        <name>sn-glycerol 3-phosphate</name>
        <dbReference type="ChEBI" id="CHEBI:57597"/>
    </ligand>
</feature>
<feature type="binding site" evidence="1">
    <location>
        <position position="277"/>
    </location>
    <ligand>
        <name>NADPH</name>
        <dbReference type="ChEBI" id="CHEBI:57783"/>
    </ligand>
</feature>
<protein>
    <recommendedName>
        <fullName evidence="1">Glycerol-3-phosphate dehydrogenase [NAD(P)+]</fullName>
        <ecNumber evidence="1">1.1.1.94</ecNumber>
    </recommendedName>
    <alternativeName>
        <fullName evidence="1">NAD(P)(+)-dependent glycerol-3-phosphate dehydrogenase</fullName>
    </alternativeName>
    <alternativeName>
        <fullName evidence="1">NAD(P)H-dependent dihydroxyacetone-phosphate reductase</fullName>
    </alternativeName>
</protein>
<keyword id="KW-0963">Cytoplasm</keyword>
<keyword id="KW-0444">Lipid biosynthesis</keyword>
<keyword id="KW-0443">Lipid metabolism</keyword>
<keyword id="KW-0520">NAD</keyword>
<keyword id="KW-0521">NADP</keyword>
<keyword id="KW-0547">Nucleotide-binding</keyword>
<keyword id="KW-0560">Oxidoreductase</keyword>
<keyword id="KW-0594">Phospholipid biosynthesis</keyword>
<keyword id="KW-1208">Phospholipid metabolism</keyword>
<keyword id="KW-1185">Reference proteome</keyword>
<name>GPDA_SYMTH</name>
<organism>
    <name type="scientific">Symbiobacterium thermophilum (strain DSM 24528 / JCM 14929 / IAM 14863 / T)</name>
    <dbReference type="NCBI Taxonomy" id="292459"/>
    <lineage>
        <taxon>Bacteria</taxon>
        <taxon>Bacillati</taxon>
        <taxon>Bacillota</taxon>
        <taxon>Clostridia</taxon>
        <taxon>Eubacteriales</taxon>
        <taxon>Symbiobacteriaceae</taxon>
        <taxon>Symbiobacterium</taxon>
    </lineage>
</organism>
<gene>
    <name evidence="1" type="primary">gpsA</name>
    <name type="ordered locus">STH1681</name>
</gene>